<comment type="function">
    <text evidence="1">Co-chaperone involved in the maturation of iron-sulfur cluster-containing proteins. Seems to help targeting proteins to be folded toward HscA (By similarity).</text>
</comment>
<comment type="subunit">
    <text evidence="1">Interacts with HscA and stimulates its ATPase activity.</text>
</comment>
<comment type="similarity">
    <text evidence="2">Belongs to the HscB family.</text>
</comment>
<keyword id="KW-0143">Chaperone</keyword>
<keyword id="KW-1185">Reference proteome</keyword>
<name>HSCB_PASMU</name>
<sequence length="172" mass="19933">MNPFNIFDLPVDFHVDQATLSARYLALQKSLHPDNFTTHSAQEQRLAMQRSAEVNDALQILKDPILRAETIIAIYTGEQQNIEENSTRDMAFLMQQMQWREQLENIEAQQDSDQLVAFSADIEQTQQALLSELADALSSQQWQQAKVINDKLRFIKKLLLEVERVEEKLLDF</sequence>
<feature type="chain" id="PRO_0000070976" description="Co-chaperone protein HscB homolog">
    <location>
        <begin position="1"/>
        <end position="172"/>
    </location>
</feature>
<feature type="domain" description="J">
    <location>
        <begin position="2"/>
        <end position="74"/>
    </location>
</feature>
<organism>
    <name type="scientific">Pasteurella multocida (strain Pm70)</name>
    <dbReference type="NCBI Taxonomy" id="272843"/>
    <lineage>
        <taxon>Bacteria</taxon>
        <taxon>Pseudomonadati</taxon>
        <taxon>Pseudomonadota</taxon>
        <taxon>Gammaproteobacteria</taxon>
        <taxon>Pasteurellales</taxon>
        <taxon>Pasteurellaceae</taxon>
        <taxon>Pasteurella</taxon>
    </lineage>
</organism>
<evidence type="ECO:0000250" key="1"/>
<evidence type="ECO:0000305" key="2"/>
<accession>Q9CNV3</accession>
<dbReference type="EMBL" id="AE004439">
    <property type="protein sequence ID" value="AAK02405.1"/>
    <property type="molecule type" value="Genomic_DNA"/>
</dbReference>
<dbReference type="RefSeq" id="WP_005725914.1">
    <property type="nucleotide sequence ID" value="NC_002663.1"/>
</dbReference>
<dbReference type="SMR" id="Q9CNV3"/>
<dbReference type="STRING" id="272843.PM0321"/>
<dbReference type="EnsemblBacteria" id="AAK02405">
    <property type="protein sequence ID" value="AAK02405"/>
    <property type="gene ID" value="PM0321"/>
</dbReference>
<dbReference type="KEGG" id="pmu:PM0321"/>
<dbReference type="HOGENOM" id="CLU_068529_2_0_6"/>
<dbReference type="OrthoDB" id="287587at2"/>
<dbReference type="Proteomes" id="UP000000809">
    <property type="component" value="Chromosome"/>
</dbReference>
<dbReference type="GO" id="GO:1990230">
    <property type="term" value="C:iron-sulfur cluster transfer complex"/>
    <property type="evidence" value="ECO:0007669"/>
    <property type="project" value="TreeGrafter"/>
</dbReference>
<dbReference type="GO" id="GO:0001671">
    <property type="term" value="F:ATPase activator activity"/>
    <property type="evidence" value="ECO:0007669"/>
    <property type="project" value="InterPro"/>
</dbReference>
<dbReference type="GO" id="GO:0051087">
    <property type="term" value="F:protein-folding chaperone binding"/>
    <property type="evidence" value="ECO:0007669"/>
    <property type="project" value="InterPro"/>
</dbReference>
<dbReference type="GO" id="GO:0044571">
    <property type="term" value="P:[2Fe-2S] cluster assembly"/>
    <property type="evidence" value="ECO:0007669"/>
    <property type="project" value="InterPro"/>
</dbReference>
<dbReference type="GO" id="GO:0051259">
    <property type="term" value="P:protein complex oligomerization"/>
    <property type="evidence" value="ECO:0007669"/>
    <property type="project" value="InterPro"/>
</dbReference>
<dbReference type="GO" id="GO:0006457">
    <property type="term" value="P:protein folding"/>
    <property type="evidence" value="ECO:0007669"/>
    <property type="project" value="UniProtKB-UniRule"/>
</dbReference>
<dbReference type="CDD" id="cd06257">
    <property type="entry name" value="DnaJ"/>
    <property type="match status" value="1"/>
</dbReference>
<dbReference type="Gene3D" id="1.10.287.110">
    <property type="entry name" value="DnaJ domain"/>
    <property type="match status" value="1"/>
</dbReference>
<dbReference type="Gene3D" id="1.20.1280.20">
    <property type="entry name" value="HscB, C-terminal domain"/>
    <property type="match status" value="1"/>
</dbReference>
<dbReference type="HAMAP" id="MF_00682">
    <property type="entry name" value="HscB"/>
    <property type="match status" value="1"/>
</dbReference>
<dbReference type="InterPro" id="IPR001623">
    <property type="entry name" value="DnaJ_domain"/>
</dbReference>
<dbReference type="InterPro" id="IPR004640">
    <property type="entry name" value="HscB"/>
</dbReference>
<dbReference type="InterPro" id="IPR036386">
    <property type="entry name" value="HscB_C_sf"/>
</dbReference>
<dbReference type="InterPro" id="IPR009073">
    <property type="entry name" value="HscB_oligo_C"/>
</dbReference>
<dbReference type="InterPro" id="IPR036869">
    <property type="entry name" value="J_dom_sf"/>
</dbReference>
<dbReference type="NCBIfam" id="TIGR00714">
    <property type="entry name" value="hscB"/>
    <property type="match status" value="1"/>
</dbReference>
<dbReference type="PANTHER" id="PTHR14021">
    <property type="entry name" value="IRON-SULFUR CLUSTER CO-CHAPERONE PROTEIN HSCB"/>
    <property type="match status" value="1"/>
</dbReference>
<dbReference type="PANTHER" id="PTHR14021:SF15">
    <property type="entry name" value="IRON-SULFUR CLUSTER CO-CHAPERONE PROTEIN HSCB"/>
    <property type="match status" value="1"/>
</dbReference>
<dbReference type="Pfam" id="PF07743">
    <property type="entry name" value="HSCB_C"/>
    <property type="match status" value="1"/>
</dbReference>
<dbReference type="SMART" id="SM00271">
    <property type="entry name" value="DnaJ"/>
    <property type="match status" value="1"/>
</dbReference>
<dbReference type="SUPFAM" id="SSF46565">
    <property type="entry name" value="Chaperone J-domain"/>
    <property type="match status" value="1"/>
</dbReference>
<dbReference type="SUPFAM" id="SSF47144">
    <property type="entry name" value="HSC20 (HSCB), C-terminal oligomerisation domain"/>
    <property type="match status" value="1"/>
</dbReference>
<reference key="1">
    <citation type="journal article" date="2001" name="Proc. Natl. Acad. Sci. U.S.A.">
        <title>Complete genomic sequence of Pasteurella multocida Pm70.</title>
        <authorList>
            <person name="May B.J."/>
            <person name="Zhang Q."/>
            <person name="Li L.L."/>
            <person name="Paustian M.L."/>
            <person name="Whittam T.S."/>
            <person name="Kapur V."/>
        </authorList>
    </citation>
    <scope>NUCLEOTIDE SEQUENCE [LARGE SCALE GENOMIC DNA]</scope>
    <source>
        <strain>Pm70</strain>
    </source>
</reference>
<proteinExistence type="inferred from homology"/>
<protein>
    <recommendedName>
        <fullName>Co-chaperone protein HscB homolog</fullName>
    </recommendedName>
</protein>
<gene>
    <name type="primary">hscB</name>
    <name type="ordered locus">PM0321</name>
</gene>